<comment type="function">
    <text evidence="1 3 4 5 6 8">Part of the gene clusters that mediate the biosynthesis of AM-toxins, host-selective toxins (HSTs) causing Alternaria blotch on apple, a worldwide distributed disease (By similarity). AM-toxins are cyclic depsipeptides containing the 3 residues 2-hydroxy-isovaleric acid (2-HIV), dehydroalanine, L-alanine which are common for all 3 AM-toxins I to III. The fourth precursor is L-alpha-amino-methoxyphenyl-valeric acid (L-Amv) for AM-toxin I, L-alpha-amino-phenyl-valeric acid (L-Apv) for AM-toxin II, and L-alpha-amino-hydroxyphenyl-valeric acid (L-Ahv) for AM-toxin III (Probable). AM-toxins have two target sites for affecting susceptible apple cells; they cause invagination of the plasma membrane and electrolyte loss and chloroplast disorganization (PubMed:22846083). The non-ribosomal peptide synthetase AMT1 contains 4 catalytic modules and is responsible for activation of each residue in AM-toxin (PubMed:10875335). The aldo-keto reductase AMT2 catalyzes the conversion of 2-keto-isovaleric acid (2-KIV) to 2-hydroxy-isovaleric acid (2-HIV), one of the precursor residues incorporated by AMT1 during AM-toxin biosynthesis, by reduction of its ketone to an alcohol (PubMed:15066029). The cytochrome P450 monooxygenase AMT3 and the thioesterase AMT4 are also important for AM-toxin production, but their exact function within the AM-toxin biosynthesis are not known yet (PubMed:17990954). Up to 21 proteins (including AMT1 to AMT4) are predicted to be involved in AM-toxin biosynthesis since their expression ishighly up-regulated in AM-toxin-producing cultures (PubMed:17990954).</text>
</comment>
<comment type="pathway">
    <text evidence="1">Mycotoxin biosynthesis.</text>
</comment>
<comment type="induction">
    <text evidence="5">Expression is up-regulated more than 10 fold in toxin producing cultures.</text>
</comment>
<comment type="miscellaneous">
    <text evidence="5">Gene clusters encoding host-selective toxins (HSTs) are localized on conditionally dispensable chromosomes (CDCs), also called supernumerary chromosomes, where they are present in multiple copies (PubMed:17990954). The CDCs are not essential for saprophytic growth but controls host-selective pathogenicity (PubMed:17990954).</text>
</comment>
<evidence type="ECO:0000250" key="1">
    <source>
        <dbReference type="UniProtKB" id="C9K7C4"/>
    </source>
</evidence>
<evidence type="ECO:0000256" key="2">
    <source>
        <dbReference type="SAM" id="MobiDB-lite"/>
    </source>
</evidence>
<evidence type="ECO:0000269" key="3">
    <source>
    </source>
</evidence>
<evidence type="ECO:0000269" key="4">
    <source>
    </source>
</evidence>
<evidence type="ECO:0000269" key="5">
    <source>
    </source>
</evidence>
<evidence type="ECO:0000303" key="6">
    <source>
    </source>
</evidence>
<evidence type="ECO:0000303" key="7">
    <source ref="1"/>
</evidence>
<evidence type="ECO:0000305" key="8">
    <source>
    </source>
</evidence>
<organism>
    <name type="scientific">Alternaria alternata</name>
    <name type="common">Alternaria rot fungus</name>
    <name type="synonym">Torula alternata</name>
    <dbReference type="NCBI Taxonomy" id="5599"/>
    <lineage>
        <taxon>Eukaryota</taxon>
        <taxon>Fungi</taxon>
        <taxon>Dikarya</taxon>
        <taxon>Ascomycota</taxon>
        <taxon>Pezizomycotina</taxon>
        <taxon>Dothideomycetes</taxon>
        <taxon>Pleosporomycetidae</taxon>
        <taxon>Pleosporales</taxon>
        <taxon>Pleosporineae</taxon>
        <taxon>Pleosporaceae</taxon>
        <taxon>Alternaria</taxon>
        <taxon>Alternaria sect. Alternaria</taxon>
        <taxon>Alternaria alternata complex</taxon>
    </lineage>
</organism>
<reference key="1">
    <citation type="submission" date="2009-10" db="EMBL/GenBank/DDBJ databases">
        <title>A Zn(II)2Cys6 transcription regulator encoded by the AMT gene cluster negatively controls AM-toxin production in the apple pathotype of Alternaria alternata.</title>
        <authorList>
            <person name="Harimoto Y."/>
            <person name="Kodama M."/>
            <person name="Yamamoto M."/>
            <person name="Otani H."/>
            <person name="Tsuge T."/>
        </authorList>
    </citation>
    <scope>NUCLEOTIDE SEQUENCE [GENOMIC DNA]</scope>
    <source>
        <strain>NBRC 8984</strain>
    </source>
</reference>
<reference key="2">
    <citation type="journal article" date="2000" name="Mol. Plant Microbe Interact.">
        <title>Cloning and characterization of a cyclic peptide synthetase gene from Alternaria alternata apple pathotype whose product is involved in AM-toxin synthesis and pathogenicity.</title>
        <authorList>
            <person name="Johnson R.D."/>
            <person name="Johnson L."/>
            <person name="Itoh Y."/>
            <person name="Kodama M."/>
            <person name="Otani H."/>
            <person name="Kohmoto K."/>
        </authorList>
    </citation>
    <scope>FUNCTION</scope>
    <source>
        <strain>M-71</strain>
    </source>
</reference>
<reference key="3">
    <citation type="journal article" date="2004" name="Mol. Microbiol.">
        <title>Dissection of the host range of the fungal plant pathogen Alternaria alternata by modification of secondary metabolism.</title>
        <authorList>
            <person name="Ito K."/>
            <person name="Tanaka T."/>
            <person name="Hatta R."/>
            <person name="Yamamoto M."/>
            <person name="Akimitsu K."/>
            <person name="Tsuge T."/>
        </authorList>
    </citation>
    <scope>FUNCTION</scope>
    <source>
        <strain>NBRC 8984</strain>
    </source>
</reference>
<reference key="4">
    <citation type="journal article" date="2007" name="Mol. Plant Microbe Interact.">
        <title>Expression profiles of genes encoded by the supernumerary chromosome controlling AM-toxin biosynthesis and pathogenicity in the apple pathotype of Alternaria alternata.</title>
        <authorList>
            <person name="Harimoto Y."/>
            <person name="Hatta R."/>
            <person name="Kodama M."/>
            <person name="Yamamoto M."/>
            <person name="Otani H."/>
            <person name="Tsuge T."/>
        </authorList>
    </citation>
    <scope>FUNCTION</scope>
    <source>
        <strain>NBRC 8984</strain>
    </source>
</reference>
<reference key="5">
    <citation type="journal article" date="2013" name="FEMS Microbiol. Rev.">
        <title>Host-selective toxins produced by the plant pathogenic fungus Alternaria alternata.</title>
        <authorList>
            <person name="Tsuge T."/>
            <person name="Harimoto Y."/>
            <person name="Akimitsu K."/>
            <person name="Ohtani K."/>
            <person name="Kodama M."/>
            <person name="Akagi Y."/>
            <person name="Egusa M."/>
            <person name="Yamamoto M."/>
            <person name="Otani H."/>
        </authorList>
    </citation>
    <scope>REVIEW ON HOST-SELECTIVE TOXINS</scope>
</reference>
<dbReference type="EMBL" id="AB525199">
    <property type="protein sequence ID" value="BAI44777.1"/>
    <property type="molecule type" value="Genomic_DNA"/>
</dbReference>
<dbReference type="CDD" id="cd12148">
    <property type="entry name" value="fungal_TF_MHR"/>
    <property type="match status" value="1"/>
</dbReference>
<proteinExistence type="evidence at transcript level"/>
<name>AM122_ALTAL</name>
<keyword id="KW-0843">Virulence</keyword>
<accession>C9K7F3</accession>
<sequence length="623" mass="69456">MSKARSQDEVGWKRNESLCEYSMHRSRRPIQEKSIQSRAEHNFTLTRAYAINGSMTPDSSNLHHSSQVAVGRDAEGSANTLNTPFSEACFSQLISDGARSYLDFDFPDETIPGTSQAKNTEPDHQASGLQNQMSCDSLRNNTIMLDWLDLDYDGNLRQYSTAQLYGLLGADAHNGSAKCTLSLLPERMVADKAEAKLLLNHKMYGLTALCKNADRGSRRQQAVWEKVEVLLSSKHQTCVSDLLRKVDSSGEHQSLDLTSLPIEKLVQRAFRELGGLNLFIKEQDVTRIQERFLDPEKLPVDVSDMSLLITSLAWGALLDPEKLQRCYFARMVAFLCLAEKTGSDNLPALILGSISTAASLSLHLETALRKSCVSNDQAVQTKRAMWILYCIDKSYALRWQTFSLVGDGSLPTTNPPDTALPSEVATTLSLEWLRIRSQYSKICSNILQLGVGAEGEPSENRSNRAVVLSAALEEWYGSVEISQMMLSLEHSDAVHMKLQTSYHYYEARFQLLSISLPDPRSSSPTGSQECREVLRRSIREVITGSNTITSEYLLQDCNHLFIQTLALSMLALDILLESDQGCGKENRALLSIVAGFFARVDIILPQSSIFEEVSNLIEILTYR</sequence>
<gene>
    <name evidence="7" type="primary">AMT12-2</name>
</gene>
<feature type="chain" id="PRO_0000444847" description="AM-toxin biosynthesis protein 12-2">
    <location>
        <begin position="1"/>
        <end position="623"/>
    </location>
</feature>
<feature type="region of interest" description="Disordered" evidence="2">
    <location>
        <begin position="110"/>
        <end position="129"/>
    </location>
</feature>
<protein>
    <recommendedName>
        <fullName evidence="7">AM-toxin biosynthesis protein 12-2</fullName>
    </recommendedName>
</protein>